<evidence type="ECO:0000255" key="1">
    <source>
        <dbReference type="HAMAP-Rule" id="MF_00158"/>
    </source>
</evidence>
<proteinExistence type="inferred from homology"/>
<reference key="1">
    <citation type="journal article" date="2001" name="Lancet">
        <title>Whole genome sequencing of meticillin-resistant Staphylococcus aureus.</title>
        <authorList>
            <person name="Kuroda M."/>
            <person name="Ohta T."/>
            <person name="Uchiyama I."/>
            <person name="Baba T."/>
            <person name="Yuzawa H."/>
            <person name="Kobayashi I."/>
            <person name="Cui L."/>
            <person name="Oguchi A."/>
            <person name="Aoki K."/>
            <person name="Nagai Y."/>
            <person name="Lian J.-Q."/>
            <person name="Ito T."/>
            <person name="Kanamori M."/>
            <person name="Matsumaru H."/>
            <person name="Maruyama A."/>
            <person name="Murakami H."/>
            <person name="Hosoyama A."/>
            <person name="Mizutani-Ui Y."/>
            <person name="Takahashi N.K."/>
            <person name="Sawano T."/>
            <person name="Inoue R."/>
            <person name="Kaito C."/>
            <person name="Sekimizu K."/>
            <person name="Hirakawa H."/>
            <person name="Kuhara S."/>
            <person name="Goto S."/>
            <person name="Yabuzaki J."/>
            <person name="Kanehisa M."/>
            <person name="Yamashita A."/>
            <person name="Oshima K."/>
            <person name="Furuya K."/>
            <person name="Yoshino C."/>
            <person name="Shiba T."/>
            <person name="Hattori M."/>
            <person name="Ogasawara N."/>
            <person name="Hayashi H."/>
            <person name="Hiramatsu K."/>
        </authorList>
    </citation>
    <scope>NUCLEOTIDE SEQUENCE [LARGE SCALE GENOMIC DNA]</scope>
    <source>
        <strain>Mu50 / ATCC 700699</strain>
    </source>
</reference>
<sequence>MTKLITTVKEMQHIVKAAKRSGTTIGFIPTMGALHDGHLTMVRESVSTNDITVVSVFVNPLQFGPNEDFDAYPRQIDKDLELVSEVGADIVFHPAVEDIYPGELGIDVKVGPLADVLEGAKRPGHFDGVVTVVNKLFNIVMPDYAYFGKKDAQQLAIVEQMVKDFNHAVEIIGIDIVREADGLAKSSRNVYLTEQERQEAVHLSKSLLLAQALYQDGERQSKVIIDRVTEYLESHISGRIEEVAVYSYPQLVEQHEITGRIFISLAVKFSKARLIDNIIIGAE</sequence>
<accession>P65658</accession>
<accession>Q99R39</accession>
<organism>
    <name type="scientific">Staphylococcus aureus (strain Mu50 / ATCC 700699)</name>
    <dbReference type="NCBI Taxonomy" id="158878"/>
    <lineage>
        <taxon>Bacteria</taxon>
        <taxon>Bacillati</taxon>
        <taxon>Bacillota</taxon>
        <taxon>Bacilli</taxon>
        <taxon>Bacillales</taxon>
        <taxon>Staphylococcaceae</taxon>
        <taxon>Staphylococcus</taxon>
    </lineage>
</organism>
<feature type="chain" id="PRO_0000128272" description="Pantothenate synthetase">
    <location>
        <begin position="1"/>
        <end position="283"/>
    </location>
</feature>
<feature type="active site" description="Proton donor" evidence="1">
    <location>
        <position position="38"/>
    </location>
</feature>
<feature type="binding site" evidence="1">
    <location>
        <begin position="31"/>
        <end position="38"/>
    </location>
    <ligand>
        <name>ATP</name>
        <dbReference type="ChEBI" id="CHEBI:30616"/>
    </ligand>
</feature>
<feature type="binding site" evidence="1">
    <location>
        <position position="62"/>
    </location>
    <ligand>
        <name>(R)-pantoate</name>
        <dbReference type="ChEBI" id="CHEBI:15980"/>
    </ligand>
</feature>
<feature type="binding site" evidence="1">
    <location>
        <position position="62"/>
    </location>
    <ligand>
        <name>beta-alanine</name>
        <dbReference type="ChEBI" id="CHEBI:57966"/>
    </ligand>
</feature>
<feature type="binding site" evidence="1">
    <location>
        <begin position="148"/>
        <end position="151"/>
    </location>
    <ligand>
        <name>ATP</name>
        <dbReference type="ChEBI" id="CHEBI:30616"/>
    </ligand>
</feature>
<feature type="binding site" evidence="1">
    <location>
        <position position="154"/>
    </location>
    <ligand>
        <name>(R)-pantoate</name>
        <dbReference type="ChEBI" id="CHEBI:15980"/>
    </ligand>
</feature>
<feature type="binding site" evidence="1">
    <location>
        <position position="177"/>
    </location>
    <ligand>
        <name>ATP</name>
        <dbReference type="ChEBI" id="CHEBI:30616"/>
    </ligand>
</feature>
<feature type="binding site" evidence="1">
    <location>
        <begin position="185"/>
        <end position="188"/>
    </location>
    <ligand>
        <name>ATP</name>
        <dbReference type="ChEBI" id="CHEBI:30616"/>
    </ligand>
</feature>
<gene>
    <name evidence="1" type="primary">panC</name>
    <name type="ordered locus">SAV2598</name>
</gene>
<name>PANC_STAAM</name>
<protein>
    <recommendedName>
        <fullName evidence="1">Pantothenate synthetase</fullName>
        <shortName evidence="1">PS</shortName>
        <ecNumber evidence="1">6.3.2.1</ecNumber>
    </recommendedName>
    <alternativeName>
        <fullName evidence="1">Pantoate--beta-alanine ligase</fullName>
    </alternativeName>
    <alternativeName>
        <fullName evidence="1">Pantoate-activating enzyme</fullName>
    </alternativeName>
</protein>
<dbReference type="EC" id="6.3.2.1" evidence="1"/>
<dbReference type="EMBL" id="BA000017">
    <property type="protein sequence ID" value="BAB58760.1"/>
    <property type="molecule type" value="Genomic_DNA"/>
</dbReference>
<dbReference type="RefSeq" id="WP_000163737.1">
    <property type="nucleotide sequence ID" value="NC_002758.2"/>
</dbReference>
<dbReference type="SMR" id="P65658"/>
<dbReference type="KEGG" id="sav:SAV2598"/>
<dbReference type="HOGENOM" id="CLU_047148_0_0_9"/>
<dbReference type="PhylomeDB" id="P65658"/>
<dbReference type="UniPathway" id="UPA00028">
    <property type="reaction ID" value="UER00005"/>
</dbReference>
<dbReference type="Proteomes" id="UP000002481">
    <property type="component" value="Chromosome"/>
</dbReference>
<dbReference type="GO" id="GO:0005829">
    <property type="term" value="C:cytosol"/>
    <property type="evidence" value="ECO:0007669"/>
    <property type="project" value="TreeGrafter"/>
</dbReference>
<dbReference type="GO" id="GO:0005524">
    <property type="term" value="F:ATP binding"/>
    <property type="evidence" value="ECO:0007669"/>
    <property type="project" value="UniProtKB-KW"/>
</dbReference>
<dbReference type="GO" id="GO:0004592">
    <property type="term" value="F:pantoate-beta-alanine ligase activity"/>
    <property type="evidence" value="ECO:0007669"/>
    <property type="project" value="UniProtKB-UniRule"/>
</dbReference>
<dbReference type="GO" id="GO:0015940">
    <property type="term" value="P:pantothenate biosynthetic process"/>
    <property type="evidence" value="ECO:0007669"/>
    <property type="project" value="UniProtKB-UniRule"/>
</dbReference>
<dbReference type="CDD" id="cd00560">
    <property type="entry name" value="PanC"/>
    <property type="match status" value="1"/>
</dbReference>
<dbReference type="FunFam" id="3.30.1300.10:FF:000001">
    <property type="entry name" value="Pantothenate synthetase"/>
    <property type="match status" value="1"/>
</dbReference>
<dbReference type="FunFam" id="3.40.50.620:FF:000013">
    <property type="entry name" value="Pantothenate synthetase"/>
    <property type="match status" value="1"/>
</dbReference>
<dbReference type="Gene3D" id="3.40.50.620">
    <property type="entry name" value="HUPs"/>
    <property type="match status" value="1"/>
</dbReference>
<dbReference type="Gene3D" id="3.30.1300.10">
    <property type="entry name" value="Pantoate-beta-alanine ligase, C-terminal domain"/>
    <property type="match status" value="1"/>
</dbReference>
<dbReference type="HAMAP" id="MF_00158">
    <property type="entry name" value="PanC"/>
    <property type="match status" value="1"/>
</dbReference>
<dbReference type="InterPro" id="IPR003721">
    <property type="entry name" value="Pantoate_ligase"/>
</dbReference>
<dbReference type="InterPro" id="IPR042176">
    <property type="entry name" value="Pantoate_ligase_C"/>
</dbReference>
<dbReference type="InterPro" id="IPR014729">
    <property type="entry name" value="Rossmann-like_a/b/a_fold"/>
</dbReference>
<dbReference type="NCBIfam" id="TIGR00018">
    <property type="entry name" value="panC"/>
    <property type="match status" value="1"/>
</dbReference>
<dbReference type="PANTHER" id="PTHR21299">
    <property type="entry name" value="CYTIDYLATE KINASE/PANTOATE-BETA-ALANINE LIGASE"/>
    <property type="match status" value="1"/>
</dbReference>
<dbReference type="PANTHER" id="PTHR21299:SF1">
    <property type="entry name" value="PANTOATE--BETA-ALANINE LIGASE"/>
    <property type="match status" value="1"/>
</dbReference>
<dbReference type="Pfam" id="PF02569">
    <property type="entry name" value="Pantoate_ligase"/>
    <property type="match status" value="1"/>
</dbReference>
<dbReference type="SUPFAM" id="SSF52374">
    <property type="entry name" value="Nucleotidylyl transferase"/>
    <property type="match status" value="1"/>
</dbReference>
<comment type="function">
    <text evidence="1">Catalyzes the condensation of pantoate with beta-alanine in an ATP-dependent reaction via a pantoyl-adenylate intermediate.</text>
</comment>
<comment type="catalytic activity">
    <reaction evidence="1">
        <text>(R)-pantoate + beta-alanine + ATP = (R)-pantothenate + AMP + diphosphate + H(+)</text>
        <dbReference type="Rhea" id="RHEA:10912"/>
        <dbReference type="ChEBI" id="CHEBI:15378"/>
        <dbReference type="ChEBI" id="CHEBI:15980"/>
        <dbReference type="ChEBI" id="CHEBI:29032"/>
        <dbReference type="ChEBI" id="CHEBI:30616"/>
        <dbReference type="ChEBI" id="CHEBI:33019"/>
        <dbReference type="ChEBI" id="CHEBI:57966"/>
        <dbReference type="ChEBI" id="CHEBI:456215"/>
        <dbReference type="EC" id="6.3.2.1"/>
    </reaction>
</comment>
<comment type="pathway">
    <text evidence="1">Cofactor biosynthesis; (R)-pantothenate biosynthesis; (R)-pantothenate from (R)-pantoate and beta-alanine: step 1/1.</text>
</comment>
<comment type="subunit">
    <text evidence="1">Homodimer.</text>
</comment>
<comment type="subcellular location">
    <subcellularLocation>
        <location evidence="1">Cytoplasm</location>
    </subcellularLocation>
</comment>
<comment type="miscellaneous">
    <text evidence="1">The reaction proceeds by a bi uni uni bi ping pong mechanism.</text>
</comment>
<comment type="similarity">
    <text evidence="1">Belongs to the pantothenate synthetase family.</text>
</comment>
<keyword id="KW-0067">ATP-binding</keyword>
<keyword id="KW-0963">Cytoplasm</keyword>
<keyword id="KW-0436">Ligase</keyword>
<keyword id="KW-0547">Nucleotide-binding</keyword>
<keyword id="KW-0566">Pantothenate biosynthesis</keyword>